<proteinExistence type="inferred from homology"/>
<feature type="chain" id="PRO_0000399517" description="Altered inheritance of mitochondria protein 21">
    <location>
        <begin position="1"/>
        <end position="701"/>
    </location>
</feature>
<feature type="region of interest" description="Disordered" evidence="2">
    <location>
        <begin position="1"/>
        <end position="35"/>
    </location>
</feature>
<feature type="region of interest" description="Disordered" evidence="2">
    <location>
        <begin position="53"/>
        <end position="177"/>
    </location>
</feature>
<feature type="region of interest" description="Disordered" evidence="2">
    <location>
        <begin position="203"/>
        <end position="546"/>
    </location>
</feature>
<feature type="region of interest" description="Disordered" evidence="2">
    <location>
        <begin position="589"/>
        <end position="701"/>
    </location>
</feature>
<feature type="compositionally biased region" description="Basic and acidic residues" evidence="2">
    <location>
        <begin position="203"/>
        <end position="236"/>
    </location>
</feature>
<feature type="compositionally biased region" description="Polar residues" evidence="2">
    <location>
        <begin position="237"/>
        <end position="247"/>
    </location>
</feature>
<feature type="compositionally biased region" description="Basic and acidic residues" evidence="2">
    <location>
        <begin position="266"/>
        <end position="294"/>
    </location>
</feature>
<feature type="compositionally biased region" description="Basic and acidic residues" evidence="2">
    <location>
        <begin position="306"/>
        <end position="319"/>
    </location>
</feature>
<feature type="compositionally biased region" description="Low complexity" evidence="2">
    <location>
        <begin position="337"/>
        <end position="346"/>
    </location>
</feature>
<feature type="compositionally biased region" description="Polar residues" evidence="2">
    <location>
        <begin position="347"/>
        <end position="359"/>
    </location>
</feature>
<feature type="compositionally biased region" description="Basic and acidic residues" evidence="2">
    <location>
        <begin position="375"/>
        <end position="397"/>
    </location>
</feature>
<feature type="compositionally biased region" description="Basic and acidic residues" evidence="2">
    <location>
        <begin position="404"/>
        <end position="414"/>
    </location>
</feature>
<feature type="compositionally biased region" description="Basic and acidic residues" evidence="2">
    <location>
        <begin position="445"/>
        <end position="455"/>
    </location>
</feature>
<feature type="compositionally biased region" description="Basic and acidic residues" evidence="2">
    <location>
        <begin position="494"/>
        <end position="503"/>
    </location>
</feature>
<feature type="compositionally biased region" description="Polar residues" evidence="2">
    <location>
        <begin position="504"/>
        <end position="519"/>
    </location>
</feature>
<feature type="compositionally biased region" description="Basic residues" evidence="2">
    <location>
        <begin position="524"/>
        <end position="537"/>
    </location>
</feature>
<feature type="compositionally biased region" description="Acidic residues" evidence="2">
    <location>
        <begin position="589"/>
        <end position="599"/>
    </location>
</feature>
<feature type="compositionally biased region" description="Basic and acidic residues" evidence="2">
    <location>
        <begin position="619"/>
        <end position="642"/>
    </location>
</feature>
<feature type="compositionally biased region" description="Polar residues" evidence="2">
    <location>
        <begin position="652"/>
        <end position="670"/>
    </location>
</feature>
<feature type="compositionally biased region" description="Basic and acidic residues" evidence="2">
    <location>
        <begin position="676"/>
        <end position="688"/>
    </location>
</feature>
<sequence length="701" mass="77561">MIPAIPARPQRKKGDSAEDSPVPEVPQRPMRHSTTEEIADLVSNTTKELEEMEQLISHGHKGEEPVVPQRRPKVVKAKEHENKQVVDTPEMPSIPQRPRRKQTSESLESVSVADGQGSKATEEMTATDSPMEDKDTNMVENTADVSKAKESTELNVPGGTEETFTTEDPLPATTGSHPEAIKEISDELNEVVAGTEKPIEHTISNDKEETTLMKTSEQRDEEMKETKSNRASEKLSDNTSENETVKTSDFVAKTAEKTAEMVSPQESRDEIEKSVAKTDEETDDKQIEEQKIESIEESIPESIEVPMKKSTEEPEKEPVEDSSEILVKGQTEEPSEKSVSSSPDQSNDAPKTSTESANEIQRKSQEPTTETTSETSEKSTKDSTEPSEKVSQDRSDQNETADGEETKPHVPESRPKKRGPPPVPKKPSSRIAAFQEMLQKQQEAQFEKSQKKGEQNDGAMNSDARTKFANNLNGLFALPGMVPGGPPPPALAKVLKDPQDTANDKTSTSNDQDTGSGTNLKDVRHGRARGPRGRKLPTKVATTEKVKVSETGNTIEIFSAWKLSIKGQVVHDADDDIDCRDQDNYVETEEQNMEEQEEREMEKELMASESTVEEEETVEQEKTVEEEKPVKEELTVKEEQTKSAEPVLVNVPTGTSSDILDNEPTKTTLDVQEPSPEQKLDTEAREESGTLPTEAEPLDNE</sequence>
<keyword id="KW-0963">Cytoplasm</keyword>
<keyword id="KW-0206">Cytoskeleton</keyword>
<keyword id="KW-1185">Reference proteome</keyword>
<gene>
    <name type="primary">AIM21</name>
    <name type="ordered locus">CAGL0J01958g</name>
</gene>
<accession>Q6FPQ4</accession>
<organism>
    <name type="scientific">Candida glabrata (strain ATCC 2001 / BCRC 20586 / JCM 3761 / NBRC 0622 / NRRL Y-65 / CBS 138)</name>
    <name type="common">Yeast</name>
    <name type="synonym">Nakaseomyces glabratus</name>
    <dbReference type="NCBI Taxonomy" id="284593"/>
    <lineage>
        <taxon>Eukaryota</taxon>
        <taxon>Fungi</taxon>
        <taxon>Dikarya</taxon>
        <taxon>Ascomycota</taxon>
        <taxon>Saccharomycotina</taxon>
        <taxon>Saccharomycetes</taxon>
        <taxon>Saccharomycetales</taxon>
        <taxon>Saccharomycetaceae</taxon>
        <taxon>Nakaseomyces</taxon>
    </lineage>
</organism>
<evidence type="ECO:0000250" key="1"/>
<evidence type="ECO:0000256" key="2">
    <source>
        <dbReference type="SAM" id="MobiDB-lite"/>
    </source>
</evidence>
<evidence type="ECO:0000305" key="3"/>
<protein>
    <recommendedName>
        <fullName>Altered inheritance of mitochondria protein 21</fullName>
    </recommendedName>
</protein>
<name>AIM21_CANGA</name>
<dbReference type="EMBL" id="CR380956">
    <property type="protein sequence ID" value="CAG60739.1"/>
    <property type="molecule type" value="Genomic_DNA"/>
</dbReference>
<dbReference type="RefSeq" id="XP_447790.1">
    <property type="nucleotide sequence ID" value="XM_447790.1"/>
</dbReference>
<dbReference type="SMR" id="Q6FPQ4"/>
<dbReference type="STRING" id="284593.Q6FPQ4"/>
<dbReference type="EnsemblFungi" id="CAGL0J01958g-T">
    <property type="protein sequence ID" value="CAGL0J01958g-T-p1"/>
    <property type="gene ID" value="CAGL0J01958g"/>
</dbReference>
<dbReference type="KEGG" id="cgr:2889815"/>
<dbReference type="CGD" id="CAL0133566">
    <property type="gene designation" value="CAGL0J01958g"/>
</dbReference>
<dbReference type="VEuPathDB" id="FungiDB:CAGL0J01958g"/>
<dbReference type="eggNOG" id="ENOG502S25J">
    <property type="taxonomic scope" value="Eukaryota"/>
</dbReference>
<dbReference type="HOGENOM" id="CLU_393288_0_0_1"/>
<dbReference type="InParanoid" id="Q6FPQ4"/>
<dbReference type="OMA" id="FQQMFNQ"/>
<dbReference type="Proteomes" id="UP000002428">
    <property type="component" value="Chromosome J"/>
</dbReference>
<dbReference type="GO" id="GO:0030479">
    <property type="term" value="C:actin cortical patch"/>
    <property type="evidence" value="ECO:0007669"/>
    <property type="project" value="UniProtKB-SubCell"/>
</dbReference>
<dbReference type="InterPro" id="IPR021582">
    <property type="entry name" value="Aim21"/>
</dbReference>
<dbReference type="Pfam" id="PF11489">
    <property type="entry name" value="Aim21"/>
    <property type="match status" value="1"/>
</dbReference>
<reference key="1">
    <citation type="journal article" date="2004" name="Nature">
        <title>Genome evolution in yeasts.</title>
        <authorList>
            <person name="Dujon B."/>
            <person name="Sherman D."/>
            <person name="Fischer G."/>
            <person name="Durrens P."/>
            <person name="Casaregola S."/>
            <person name="Lafontaine I."/>
            <person name="de Montigny J."/>
            <person name="Marck C."/>
            <person name="Neuveglise C."/>
            <person name="Talla E."/>
            <person name="Goffard N."/>
            <person name="Frangeul L."/>
            <person name="Aigle M."/>
            <person name="Anthouard V."/>
            <person name="Babour A."/>
            <person name="Barbe V."/>
            <person name="Barnay S."/>
            <person name="Blanchin S."/>
            <person name="Beckerich J.-M."/>
            <person name="Beyne E."/>
            <person name="Bleykasten C."/>
            <person name="Boisrame A."/>
            <person name="Boyer J."/>
            <person name="Cattolico L."/>
            <person name="Confanioleri F."/>
            <person name="de Daruvar A."/>
            <person name="Despons L."/>
            <person name="Fabre E."/>
            <person name="Fairhead C."/>
            <person name="Ferry-Dumazet H."/>
            <person name="Groppi A."/>
            <person name="Hantraye F."/>
            <person name="Hennequin C."/>
            <person name="Jauniaux N."/>
            <person name="Joyet P."/>
            <person name="Kachouri R."/>
            <person name="Kerrest A."/>
            <person name="Koszul R."/>
            <person name="Lemaire M."/>
            <person name="Lesur I."/>
            <person name="Ma L."/>
            <person name="Muller H."/>
            <person name="Nicaud J.-M."/>
            <person name="Nikolski M."/>
            <person name="Oztas S."/>
            <person name="Ozier-Kalogeropoulos O."/>
            <person name="Pellenz S."/>
            <person name="Potier S."/>
            <person name="Richard G.-F."/>
            <person name="Straub M.-L."/>
            <person name="Suleau A."/>
            <person name="Swennen D."/>
            <person name="Tekaia F."/>
            <person name="Wesolowski-Louvel M."/>
            <person name="Westhof E."/>
            <person name="Wirth B."/>
            <person name="Zeniou-Meyer M."/>
            <person name="Zivanovic Y."/>
            <person name="Bolotin-Fukuhara M."/>
            <person name="Thierry A."/>
            <person name="Bouchier C."/>
            <person name="Caudron B."/>
            <person name="Scarpelli C."/>
            <person name="Gaillardin C."/>
            <person name="Weissenbach J."/>
            <person name="Wincker P."/>
            <person name="Souciet J.-L."/>
        </authorList>
    </citation>
    <scope>NUCLEOTIDE SEQUENCE [LARGE SCALE GENOMIC DNA]</scope>
    <source>
        <strain>ATCC 2001 / BCRC 20586 / JCM 3761 / NBRC 0622 / NRRL Y-65 / CBS 138</strain>
    </source>
</reference>
<comment type="function">
    <text evidence="1">Involved in mitochondrial migration along actin filaments.</text>
</comment>
<comment type="subcellular location">
    <subcellularLocation>
        <location evidence="1">Cytoplasm</location>
        <location evidence="1">Cytoskeleton</location>
        <location evidence="1">Actin patch</location>
    </subcellularLocation>
    <text evidence="1">Cortical actin patches.</text>
</comment>
<comment type="similarity">
    <text evidence="3">Belongs to the AIM21 family.</text>
</comment>